<sequence length="425" mass="48181">MLDLKRIRTDFDTVAAKLKKRGVSEDTLTHLKELDEKRRALLVQSEELKAERNIASAAIAQAKRQKEDATQQIADMQKVSADIKTIDNQLVAIDQQVTDIITVLPNTPHDSVPVGADEEDNVEIRRWGTPRDFDFEVKAHWDLGEDLDILDWERGAKVTGARFLFYKNLGARLERALYNFMLDEHIKEGYQEIITPYMVNHDSMFGTGQYPKFKEDTFELADTNFVLIPTAEVPLTNYYRGEILDGKELPIYFTAMSPSFRSEAGSAGRDTRGLIRLHQFHKVEMVKFAKPEESYQELEKMTANAENILQKLGLPYRVISLCTGDMGFSAAKTYDVEVWIPAQNTYREISSCSNTEDFQARRAQIRYRDEADGKVKLLHTLNGSGLAVGRTVAAILENYQNEDGSVTIPEVLRPYMGGETVISPK</sequence>
<accession>B5XHX4</accession>
<evidence type="ECO:0000255" key="1">
    <source>
        <dbReference type="HAMAP-Rule" id="MF_00176"/>
    </source>
</evidence>
<feature type="chain" id="PRO_1000098132" description="Serine--tRNA ligase">
    <location>
        <begin position="1"/>
        <end position="425"/>
    </location>
</feature>
<feature type="binding site" evidence="1">
    <location>
        <begin position="230"/>
        <end position="232"/>
    </location>
    <ligand>
        <name>L-serine</name>
        <dbReference type="ChEBI" id="CHEBI:33384"/>
    </ligand>
</feature>
<feature type="binding site" evidence="1">
    <location>
        <begin position="261"/>
        <end position="263"/>
    </location>
    <ligand>
        <name>ATP</name>
        <dbReference type="ChEBI" id="CHEBI:30616"/>
    </ligand>
</feature>
<feature type="binding site" evidence="1">
    <location>
        <position position="284"/>
    </location>
    <ligand>
        <name>L-serine</name>
        <dbReference type="ChEBI" id="CHEBI:33384"/>
    </ligand>
</feature>
<feature type="binding site" evidence="1">
    <location>
        <begin position="348"/>
        <end position="351"/>
    </location>
    <ligand>
        <name>ATP</name>
        <dbReference type="ChEBI" id="CHEBI:30616"/>
    </ligand>
</feature>
<feature type="binding site" evidence="1">
    <location>
        <position position="384"/>
    </location>
    <ligand>
        <name>L-serine</name>
        <dbReference type="ChEBI" id="CHEBI:33384"/>
    </ligand>
</feature>
<protein>
    <recommendedName>
        <fullName evidence="1">Serine--tRNA ligase</fullName>
        <ecNumber evidence="1">6.1.1.11</ecNumber>
    </recommendedName>
    <alternativeName>
        <fullName evidence="1">Seryl-tRNA synthetase</fullName>
        <shortName evidence="1">SerRS</shortName>
    </alternativeName>
    <alternativeName>
        <fullName evidence="1">Seryl-tRNA(Ser/Sec) synthetase</fullName>
    </alternativeName>
</protein>
<comment type="function">
    <text evidence="1">Catalyzes the attachment of serine to tRNA(Ser). Is also able to aminoacylate tRNA(Sec) with serine, to form the misacylated tRNA L-seryl-tRNA(Sec), which will be further converted into selenocysteinyl-tRNA(Sec).</text>
</comment>
<comment type="catalytic activity">
    <reaction evidence="1">
        <text>tRNA(Ser) + L-serine + ATP = L-seryl-tRNA(Ser) + AMP + diphosphate + H(+)</text>
        <dbReference type="Rhea" id="RHEA:12292"/>
        <dbReference type="Rhea" id="RHEA-COMP:9669"/>
        <dbReference type="Rhea" id="RHEA-COMP:9703"/>
        <dbReference type="ChEBI" id="CHEBI:15378"/>
        <dbReference type="ChEBI" id="CHEBI:30616"/>
        <dbReference type="ChEBI" id="CHEBI:33019"/>
        <dbReference type="ChEBI" id="CHEBI:33384"/>
        <dbReference type="ChEBI" id="CHEBI:78442"/>
        <dbReference type="ChEBI" id="CHEBI:78533"/>
        <dbReference type="ChEBI" id="CHEBI:456215"/>
        <dbReference type="EC" id="6.1.1.11"/>
    </reaction>
</comment>
<comment type="catalytic activity">
    <reaction evidence="1">
        <text>tRNA(Sec) + L-serine + ATP = L-seryl-tRNA(Sec) + AMP + diphosphate + H(+)</text>
        <dbReference type="Rhea" id="RHEA:42580"/>
        <dbReference type="Rhea" id="RHEA-COMP:9742"/>
        <dbReference type="Rhea" id="RHEA-COMP:10128"/>
        <dbReference type="ChEBI" id="CHEBI:15378"/>
        <dbReference type="ChEBI" id="CHEBI:30616"/>
        <dbReference type="ChEBI" id="CHEBI:33019"/>
        <dbReference type="ChEBI" id="CHEBI:33384"/>
        <dbReference type="ChEBI" id="CHEBI:78442"/>
        <dbReference type="ChEBI" id="CHEBI:78533"/>
        <dbReference type="ChEBI" id="CHEBI:456215"/>
        <dbReference type="EC" id="6.1.1.11"/>
    </reaction>
</comment>
<comment type="pathway">
    <text evidence="1">Aminoacyl-tRNA biosynthesis; selenocysteinyl-tRNA(Sec) biosynthesis; L-seryl-tRNA(Sec) from L-serine and tRNA(Sec): step 1/1.</text>
</comment>
<comment type="subunit">
    <text evidence="1">Homodimer. The tRNA molecule binds across the dimer.</text>
</comment>
<comment type="subcellular location">
    <subcellularLocation>
        <location evidence="1">Cytoplasm</location>
    </subcellularLocation>
</comment>
<comment type="domain">
    <text evidence="1">Consists of two distinct domains, a catalytic core and a N-terminal extension that is involved in tRNA binding.</text>
</comment>
<comment type="similarity">
    <text evidence="1">Belongs to the class-II aminoacyl-tRNA synthetase family. Type-1 seryl-tRNA synthetase subfamily.</text>
</comment>
<organism>
    <name type="scientific">Streptococcus pyogenes serotype M49 (strain NZ131)</name>
    <dbReference type="NCBI Taxonomy" id="471876"/>
    <lineage>
        <taxon>Bacteria</taxon>
        <taxon>Bacillati</taxon>
        <taxon>Bacillota</taxon>
        <taxon>Bacilli</taxon>
        <taxon>Lactobacillales</taxon>
        <taxon>Streptococcaceae</taxon>
        <taxon>Streptococcus</taxon>
    </lineage>
</organism>
<gene>
    <name evidence="1" type="primary">serS</name>
    <name type="ordered locus">Spy49_1358</name>
</gene>
<name>SYS_STRPZ</name>
<dbReference type="EC" id="6.1.1.11" evidence="1"/>
<dbReference type="EMBL" id="CP000829">
    <property type="protein sequence ID" value="ACI61636.1"/>
    <property type="molecule type" value="Genomic_DNA"/>
</dbReference>
<dbReference type="SMR" id="B5XHX4"/>
<dbReference type="KEGG" id="soz:Spy49_1358"/>
<dbReference type="HOGENOM" id="CLU_023797_1_1_9"/>
<dbReference type="UniPathway" id="UPA00906">
    <property type="reaction ID" value="UER00895"/>
</dbReference>
<dbReference type="Proteomes" id="UP000001039">
    <property type="component" value="Chromosome"/>
</dbReference>
<dbReference type="GO" id="GO:0005737">
    <property type="term" value="C:cytoplasm"/>
    <property type="evidence" value="ECO:0007669"/>
    <property type="project" value="UniProtKB-SubCell"/>
</dbReference>
<dbReference type="GO" id="GO:0005524">
    <property type="term" value="F:ATP binding"/>
    <property type="evidence" value="ECO:0007669"/>
    <property type="project" value="UniProtKB-UniRule"/>
</dbReference>
<dbReference type="GO" id="GO:0140096">
    <property type="term" value="F:catalytic activity, acting on a protein"/>
    <property type="evidence" value="ECO:0007669"/>
    <property type="project" value="UniProtKB-ARBA"/>
</dbReference>
<dbReference type="GO" id="GO:0004828">
    <property type="term" value="F:serine-tRNA ligase activity"/>
    <property type="evidence" value="ECO:0007669"/>
    <property type="project" value="UniProtKB-UniRule"/>
</dbReference>
<dbReference type="GO" id="GO:0016740">
    <property type="term" value="F:transferase activity"/>
    <property type="evidence" value="ECO:0007669"/>
    <property type="project" value="UniProtKB-ARBA"/>
</dbReference>
<dbReference type="GO" id="GO:0016260">
    <property type="term" value="P:selenocysteine biosynthetic process"/>
    <property type="evidence" value="ECO:0007669"/>
    <property type="project" value="UniProtKB-UniRule"/>
</dbReference>
<dbReference type="GO" id="GO:0006434">
    <property type="term" value="P:seryl-tRNA aminoacylation"/>
    <property type="evidence" value="ECO:0007669"/>
    <property type="project" value="UniProtKB-UniRule"/>
</dbReference>
<dbReference type="CDD" id="cd00770">
    <property type="entry name" value="SerRS_core"/>
    <property type="match status" value="1"/>
</dbReference>
<dbReference type="Gene3D" id="3.30.930.10">
    <property type="entry name" value="Bira Bifunctional Protein, Domain 2"/>
    <property type="match status" value="1"/>
</dbReference>
<dbReference type="Gene3D" id="1.10.287.40">
    <property type="entry name" value="Serine-tRNA synthetase, tRNA binding domain"/>
    <property type="match status" value="1"/>
</dbReference>
<dbReference type="HAMAP" id="MF_00176">
    <property type="entry name" value="Ser_tRNA_synth_type1"/>
    <property type="match status" value="1"/>
</dbReference>
<dbReference type="InterPro" id="IPR002314">
    <property type="entry name" value="aa-tRNA-synt_IIb"/>
</dbReference>
<dbReference type="InterPro" id="IPR006195">
    <property type="entry name" value="aa-tRNA-synth_II"/>
</dbReference>
<dbReference type="InterPro" id="IPR045864">
    <property type="entry name" value="aa-tRNA-synth_II/BPL/LPL"/>
</dbReference>
<dbReference type="InterPro" id="IPR002317">
    <property type="entry name" value="Ser-tRNA-ligase_type_1"/>
</dbReference>
<dbReference type="InterPro" id="IPR015866">
    <property type="entry name" value="Ser-tRNA-synth_1_N"/>
</dbReference>
<dbReference type="InterPro" id="IPR042103">
    <property type="entry name" value="SerRS_1_N_sf"/>
</dbReference>
<dbReference type="InterPro" id="IPR033729">
    <property type="entry name" value="SerRS_core"/>
</dbReference>
<dbReference type="InterPro" id="IPR010978">
    <property type="entry name" value="tRNA-bd_arm"/>
</dbReference>
<dbReference type="NCBIfam" id="TIGR00414">
    <property type="entry name" value="serS"/>
    <property type="match status" value="1"/>
</dbReference>
<dbReference type="PANTHER" id="PTHR43697:SF1">
    <property type="entry name" value="SERINE--TRNA LIGASE"/>
    <property type="match status" value="1"/>
</dbReference>
<dbReference type="PANTHER" id="PTHR43697">
    <property type="entry name" value="SERYL-TRNA SYNTHETASE"/>
    <property type="match status" value="1"/>
</dbReference>
<dbReference type="Pfam" id="PF02403">
    <property type="entry name" value="Seryl_tRNA_N"/>
    <property type="match status" value="1"/>
</dbReference>
<dbReference type="Pfam" id="PF00587">
    <property type="entry name" value="tRNA-synt_2b"/>
    <property type="match status" value="1"/>
</dbReference>
<dbReference type="PIRSF" id="PIRSF001529">
    <property type="entry name" value="Ser-tRNA-synth_IIa"/>
    <property type="match status" value="1"/>
</dbReference>
<dbReference type="PRINTS" id="PR00981">
    <property type="entry name" value="TRNASYNTHSER"/>
</dbReference>
<dbReference type="SUPFAM" id="SSF55681">
    <property type="entry name" value="Class II aaRS and biotin synthetases"/>
    <property type="match status" value="1"/>
</dbReference>
<dbReference type="SUPFAM" id="SSF46589">
    <property type="entry name" value="tRNA-binding arm"/>
    <property type="match status" value="1"/>
</dbReference>
<dbReference type="PROSITE" id="PS50862">
    <property type="entry name" value="AA_TRNA_LIGASE_II"/>
    <property type="match status" value="1"/>
</dbReference>
<reference key="1">
    <citation type="journal article" date="2008" name="J. Bacteriol.">
        <title>Genome sequence of a nephritogenic and highly transformable M49 strain of Streptococcus pyogenes.</title>
        <authorList>
            <person name="McShan W.M."/>
            <person name="Ferretti J.J."/>
            <person name="Karasawa T."/>
            <person name="Suvorov A.N."/>
            <person name="Lin S."/>
            <person name="Qin B."/>
            <person name="Jia H."/>
            <person name="Kenton S."/>
            <person name="Najar F."/>
            <person name="Wu H."/>
            <person name="Scott J."/>
            <person name="Roe B.A."/>
            <person name="Savic D.J."/>
        </authorList>
    </citation>
    <scope>NUCLEOTIDE SEQUENCE [LARGE SCALE GENOMIC DNA]</scope>
    <source>
        <strain>NZ131</strain>
    </source>
</reference>
<proteinExistence type="inferred from homology"/>
<keyword id="KW-0030">Aminoacyl-tRNA synthetase</keyword>
<keyword id="KW-0067">ATP-binding</keyword>
<keyword id="KW-0963">Cytoplasm</keyword>
<keyword id="KW-0436">Ligase</keyword>
<keyword id="KW-0547">Nucleotide-binding</keyword>
<keyword id="KW-0648">Protein biosynthesis</keyword>